<feature type="chain" id="PRO_0000116414" description="60S ribosomal export protein nmd3">
    <location>
        <begin position="1"/>
        <end position="498"/>
    </location>
</feature>
<name>NMD3_SCHPO</name>
<gene>
    <name type="primary">nmd3</name>
    <name type="ORF">SPAC16C9.03</name>
</gene>
<accession>Q09817</accession>
<comment type="function">
    <text evidence="1">Acts as an adapter for the XPO1/CRM1-mediated export of the 60S ribosomal subunit.</text>
</comment>
<comment type="subunit">
    <text evidence="1">Associates with the 60S ribosomal subunit.</text>
</comment>
<comment type="subcellular location">
    <subcellularLocation>
        <location evidence="1">Cytoplasm</location>
    </subcellularLocation>
    <subcellularLocation>
        <location evidence="1">Nucleus</location>
        <location evidence="1">Nucleoplasm</location>
    </subcellularLocation>
    <text evidence="1">Shuttles between the nucleus and the cytoplasm in a XPO1/CRM1-dependent manner.</text>
</comment>
<comment type="similarity">
    <text evidence="2">Belongs to the NMD3 family.</text>
</comment>
<dbReference type="EMBL" id="CU329670">
    <property type="protein sequence ID" value="CAA91191.1"/>
    <property type="molecule type" value="Genomic_DNA"/>
</dbReference>
<dbReference type="PIR" id="S62473">
    <property type="entry name" value="S62473"/>
</dbReference>
<dbReference type="RefSeq" id="NP_593077.1">
    <property type="nucleotide sequence ID" value="NM_001018474.2"/>
</dbReference>
<dbReference type="SMR" id="Q09817"/>
<dbReference type="BioGRID" id="278785">
    <property type="interactions" value="1"/>
</dbReference>
<dbReference type="FunCoup" id="Q09817">
    <property type="interactions" value="937"/>
</dbReference>
<dbReference type="STRING" id="284812.Q09817"/>
<dbReference type="iPTMnet" id="Q09817"/>
<dbReference type="PaxDb" id="4896-SPAC16C9.03.1"/>
<dbReference type="EnsemblFungi" id="SPAC16C9.03.1">
    <property type="protein sequence ID" value="SPAC16C9.03.1:pep"/>
    <property type="gene ID" value="SPAC16C9.03"/>
</dbReference>
<dbReference type="GeneID" id="2542319"/>
<dbReference type="KEGG" id="spo:2542319"/>
<dbReference type="PomBase" id="SPAC16C9.03">
    <property type="gene designation" value="nmd3"/>
</dbReference>
<dbReference type="VEuPathDB" id="FungiDB:SPAC16C9.03"/>
<dbReference type="eggNOG" id="KOG2613">
    <property type="taxonomic scope" value="Eukaryota"/>
</dbReference>
<dbReference type="HOGENOM" id="CLU_027444_2_0_1"/>
<dbReference type="InParanoid" id="Q09817"/>
<dbReference type="OMA" id="VILVRKH"/>
<dbReference type="PhylomeDB" id="Q09817"/>
<dbReference type="PRO" id="PR:Q09817"/>
<dbReference type="Proteomes" id="UP000002485">
    <property type="component" value="Chromosome I"/>
</dbReference>
<dbReference type="GO" id="GO:0005737">
    <property type="term" value="C:cytoplasm"/>
    <property type="evidence" value="ECO:0000318"/>
    <property type="project" value="GO_Central"/>
</dbReference>
<dbReference type="GO" id="GO:0005829">
    <property type="term" value="C:cytosol"/>
    <property type="evidence" value="ECO:0007005"/>
    <property type="project" value="PomBase"/>
</dbReference>
<dbReference type="GO" id="GO:0005654">
    <property type="term" value="C:nucleoplasm"/>
    <property type="evidence" value="ECO:0007669"/>
    <property type="project" value="UniProtKB-SubCell"/>
</dbReference>
<dbReference type="GO" id="GO:0005634">
    <property type="term" value="C:nucleus"/>
    <property type="evidence" value="ECO:0007005"/>
    <property type="project" value="PomBase"/>
</dbReference>
<dbReference type="GO" id="GO:0030674">
    <property type="term" value="F:protein-macromolecule adaptor activity"/>
    <property type="evidence" value="ECO:0000250"/>
    <property type="project" value="PomBase"/>
</dbReference>
<dbReference type="GO" id="GO:0043023">
    <property type="term" value="F:ribosomal large subunit binding"/>
    <property type="evidence" value="ECO:0000318"/>
    <property type="project" value="GO_Central"/>
</dbReference>
<dbReference type="GO" id="GO:0015031">
    <property type="term" value="P:protein transport"/>
    <property type="evidence" value="ECO:0007669"/>
    <property type="project" value="UniProtKB-KW"/>
</dbReference>
<dbReference type="GO" id="GO:0000055">
    <property type="term" value="P:ribosomal large subunit export from nucleus"/>
    <property type="evidence" value="ECO:0000318"/>
    <property type="project" value="GO_Central"/>
</dbReference>
<dbReference type="InterPro" id="IPR039768">
    <property type="entry name" value="Nmd3"/>
</dbReference>
<dbReference type="InterPro" id="IPR007064">
    <property type="entry name" value="Nmd3_N"/>
</dbReference>
<dbReference type="InterPro" id="IPR048898">
    <property type="entry name" value="NMD3_OB"/>
</dbReference>
<dbReference type="InterPro" id="IPR048899">
    <property type="entry name" value="NMD_SH3"/>
</dbReference>
<dbReference type="PANTHER" id="PTHR12746:SF2">
    <property type="entry name" value="60S RIBOSOMAL EXPORT PROTEIN NMD3"/>
    <property type="match status" value="1"/>
</dbReference>
<dbReference type="PANTHER" id="PTHR12746">
    <property type="entry name" value="NONSENSE-MEDIATED MRNA DECAY PROTEIN 3"/>
    <property type="match status" value="1"/>
</dbReference>
<dbReference type="Pfam" id="PF04981">
    <property type="entry name" value="NMD3"/>
    <property type="match status" value="1"/>
</dbReference>
<dbReference type="Pfam" id="PF21192">
    <property type="entry name" value="NMD3_OB"/>
    <property type="match status" value="1"/>
</dbReference>
<dbReference type="Pfam" id="PF21193">
    <property type="entry name" value="NMD_SH3"/>
    <property type="match status" value="1"/>
</dbReference>
<keyword id="KW-0963">Cytoplasm</keyword>
<keyword id="KW-0539">Nucleus</keyword>
<keyword id="KW-0653">Protein transport</keyword>
<keyword id="KW-1185">Reference proteome</keyword>
<keyword id="KW-0813">Transport</keyword>
<reference key="1">
    <citation type="journal article" date="2002" name="Nature">
        <title>The genome sequence of Schizosaccharomyces pombe.</title>
        <authorList>
            <person name="Wood V."/>
            <person name="Gwilliam R."/>
            <person name="Rajandream M.A."/>
            <person name="Lyne M.H."/>
            <person name="Lyne R."/>
            <person name="Stewart A."/>
            <person name="Sgouros J.G."/>
            <person name="Peat N."/>
            <person name="Hayles J."/>
            <person name="Baker S.G."/>
            <person name="Basham D."/>
            <person name="Bowman S."/>
            <person name="Brooks K."/>
            <person name="Brown D."/>
            <person name="Brown S."/>
            <person name="Chillingworth T."/>
            <person name="Churcher C.M."/>
            <person name="Collins M."/>
            <person name="Connor R."/>
            <person name="Cronin A."/>
            <person name="Davis P."/>
            <person name="Feltwell T."/>
            <person name="Fraser A."/>
            <person name="Gentles S."/>
            <person name="Goble A."/>
            <person name="Hamlin N."/>
            <person name="Harris D.E."/>
            <person name="Hidalgo J."/>
            <person name="Hodgson G."/>
            <person name="Holroyd S."/>
            <person name="Hornsby T."/>
            <person name="Howarth S."/>
            <person name="Huckle E.J."/>
            <person name="Hunt S."/>
            <person name="Jagels K."/>
            <person name="James K.D."/>
            <person name="Jones L."/>
            <person name="Jones M."/>
            <person name="Leather S."/>
            <person name="McDonald S."/>
            <person name="McLean J."/>
            <person name="Mooney P."/>
            <person name="Moule S."/>
            <person name="Mungall K.L."/>
            <person name="Murphy L.D."/>
            <person name="Niblett D."/>
            <person name="Odell C."/>
            <person name="Oliver K."/>
            <person name="O'Neil S."/>
            <person name="Pearson D."/>
            <person name="Quail M.A."/>
            <person name="Rabbinowitsch E."/>
            <person name="Rutherford K.M."/>
            <person name="Rutter S."/>
            <person name="Saunders D."/>
            <person name="Seeger K."/>
            <person name="Sharp S."/>
            <person name="Skelton J."/>
            <person name="Simmonds M.N."/>
            <person name="Squares R."/>
            <person name="Squares S."/>
            <person name="Stevens K."/>
            <person name="Taylor K."/>
            <person name="Taylor R.G."/>
            <person name="Tivey A."/>
            <person name="Walsh S.V."/>
            <person name="Warren T."/>
            <person name="Whitehead S."/>
            <person name="Woodward J.R."/>
            <person name="Volckaert G."/>
            <person name="Aert R."/>
            <person name="Robben J."/>
            <person name="Grymonprez B."/>
            <person name="Weltjens I."/>
            <person name="Vanstreels E."/>
            <person name="Rieger M."/>
            <person name="Schaefer M."/>
            <person name="Mueller-Auer S."/>
            <person name="Gabel C."/>
            <person name="Fuchs M."/>
            <person name="Duesterhoeft A."/>
            <person name="Fritzc C."/>
            <person name="Holzer E."/>
            <person name="Moestl D."/>
            <person name="Hilbert H."/>
            <person name="Borzym K."/>
            <person name="Langer I."/>
            <person name="Beck A."/>
            <person name="Lehrach H."/>
            <person name="Reinhardt R."/>
            <person name="Pohl T.M."/>
            <person name="Eger P."/>
            <person name="Zimmermann W."/>
            <person name="Wedler H."/>
            <person name="Wambutt R."/>
            <person name="Purnelle B."/>
            <person name="Goffeau A."/>
            <person name="Cadieu E."/>
            <person name="Dreano S."/>
            <person name="Gloux S."/>
            <person name="Lelaure V."/>
            <person name="Mottier S."/>
            <person name="Galibert F."/>
            <person name="Aves S.J."/>
            <person name="Xiang Z."/>
            <person name="Hunt C."/>
            <person name="Moore K."/>
            <person name="Hurst S.M."/>
            <person name="Lucas M."/>
            <person name="Rochet M."/>
            <person name="Gaillardin C."/>
            <person name="Tallada V.A."/>
            <person name="Garzon A."/>
            <person name="Thode G."/>
            <person name="Daga R.R."/>
            <person name="Cruzado L."/>
            <person name="Jimenez J."/>
            <person name="Sanchez M."/>
            <person name="del Rey F."/>
            <person name="Benito J."/>
            <person name="Dominguez A."/>
            <person name="Revuelta J.L."/>
            <person name="Moreno S."/>
            <person name="Armstrong J."/>
            <person name="Forsburg S.L."/>
            <person name="Cerutti L."/>
            <person name="Lowe T."/>
            <person name="McCombie W.R."/>
            <person name="Paulsen I."/>
            <person name="Potashkin J."/>
            <person name="Shpakovski G.V."/>
            <person name="Ussery D."/>
            <person name="Barrell B.G."/>
            <person name="Nurse P."/>
        </authorList>
    </citation>
    <scope>NUCLEOTIDE SEQUENCE [LARGE SCALE GENOMIC DNA]</scope>
    <source>
        <strain>972 / ATCC 24843</strain>
    </source>
</reference>
<protein>
    <recommendedName>
        <fullName>60S ribosomal export protein nmd3</fullName>
    </recommendedName>
</protein>
<evidence type="ECO:0000250" key="1"/>
<evidence type="ECO:0000305" key="2"/>
<organism>
    <name type="scientific">Schizosaccharomyces pombe (strain 972 / ATCC 24843)</name>
    <name type="common">Fission yeast</name>
    <dbReference type="NCBI Taxonomy" id="284812"/>
    <lineage>
        <taxon>Eukaryota</taxon>
        <taxon>Fungi</taxon>
        <taxon>Dikarya</taxon>
        <taxon>Ascomycota</taxon>
        <taxon>Taphrinomycotina</taxon>
        <taxon>Schizosaccharomycetes</taxon>
        <taxon>Schizosaccharomycetales</taxon>
        <taxon>Schizosaccharomycetaceae</taxon>
        <taxon>Schizosaccharomyces</taxon>
    </lineage>
</organism>
<sequence length="498" mass="56551">MDMDSGSMGVAFQPSEPIASTILCCECGVPTPPNAAAMCMDCIKMTTDITSGIPRESTVNHCRECERYMQPPNNWMIAPLESRELMAICLKKLRGLNQVRLVDANFIWTEPHSRRIKVKLTVQKEAFTNTILQQSFQVEFYVNNTQCPDCARTYTPHIWKAVCQVRQKVLHKRTFLYLEQIILKHKAHMNTVNIKETKDGIDFYFGQRAHAIKMVEFLSAVVPIRYKGSEELISEDFKSNTANYKFTYSIEIVPICKDDLVCLPKTVAKAHGNIAQLVVCTKVGPTIRFLDPLTLQTCDMLPSIYWRTPFPALADIPELTEFIVADVDLLGPTNGKYALADVELIKSSDGSTHLTRTHLGGILNAGNTVLAYHLAVTNFNNEVYDTLREDSIPEVVIVKKTYPQTKKKNRNWRLKTIGMQKAEDVKKQDIERQERDYELFLQNLEEDPELRQGVNLYKAPVKAIAVADTDMDEEDEVDEDIPQISVDELLDDVEAMHI</sequence>
<proteinExistence type="inferred from homology"/>